<accession>Q3SZ90</accession>
<reference key="1">
    <citation type="submission" date="2005-08" db="EMBL/GenBank/DDBJ databases">
        <authorList>
            <consortium name="NIH - Mammalian Gene Collection (MGC) project"/>
        </authorList>
    </citation>
    <scope>NUCLEOTIDE SEQUENCE [LARGE SCALE MRNA]</scope>
    <source>
        <strain>Hereford</strain>
        <tissue>Kidney</tissue>
    </source>
</reference>
<name>RL13A_BOVIN</name>
<gene>
    <name type="primary">RPL13A</name>
</gene>
<feature type="initiator methionine" description="Removed" evidence="2">
    <location>
        <position position="1"/>
    </location>
</feature>
<feature type="chain" id="PRO_0000230999" description="Large ribosomal subunit protein uL13">
    <location>
        <begin position="2"/>
        <end position="203"/>
    </location>
</feature>
<feature type="modified residue" description="N-acetylalanine" evidence="2">
    <location>
        <position position="2"/>
    </location>
</feature>
<feature type="modified residue" description="Citrulline" evidence="1">
    <location>
        <position position="59"/>
    </location>
</feature>
<feature type="modified residue" description="Phosphoserine" evidence="2">
    <location>
        <position position="77"/>
    </location>
</feature>
<feature type="modified residue" description="Citrulline" evidence="1">
    <location>
        <position position="140"/>
    </location>
</feature>
<feature type="modified residue" description="N6-acetyllysine" evidence="2">
    <location>
        <position position="191"/>
    </location>
</feature>
<proteinExistence type="evidence at transcript level"/>
<comment type="function">
    <text evidence="2">Associated with ribosomes but is not required for canonical ribosome function and has extra-ribosomal functions. Component of the GAIT (gamma interferon-activated inhibitor of translation) complex which mediates interferon-gamma-induced transcript-selective translation inhibition in inflammation processes. Upon interferon-gamma activation and subsequent phosphorylation dissociates from the ribosome and assembles into the GAIT complex which binds to stem loop-containing GAIT elements in the 3'-UTR of diverse inflammatory mRNAs (such as ceruplasmin) and suppresses their translation. In the GAIT complex interacts with m7G cap-bound eIF4G at or near the eIF3-binding site and blocks the recruitment of the 43S ribosomal complex. Involved in methylation of rRNA.</text>
</comment>
<comment type="subunit">
    <text evidence="2">Component of the 60S ribosome. Component of the GAIT complex. Interacts with EIF4G1.</text>
</comment>
<comment type="subcellular location">
    <subcellularLocation>
        <location evidence="2">Cytoplasm</location>
    </subcellularLocation>
</comment>
<comment type="PTM">
    <text evidence="1">Phosphorylation at Ser-77 upon interferon-gamma treatment in macrophages involves a DAPK1-DAPK3 kinase cascade and is causing release from the ribosome, association with the GAIT complex and subsequent involvement in transcript-selective translation inhibition.</text>
</comment>
<comment type="PTM">
    <text evidence="1">Citrullinated by PADI4.</text>
</comment>
<comment type="similarity">
    <text evidence="3">Belongs to the universal ribosomal protein uL13 family.</text>
</comment>
<evidence type="ECO:0000250" key="1">
    <source>
        <dbReference type="UniProtKB" id="P19253"/>
    </source>
</evidence>
<evidence type="ECO:0000250" key="2">
    <source>
        <dbReference type="UniProtKB" id="P40429"/>
    </source>
</evidence>
<evidence type="ECO:0000305" key="3"/>
<sequence>MAEGQVLVLDGRGHLLGRLAAIVAKQVLLGRKVVVVRCEGINISGNFYRNKLKYLAFLRKRMNTNPSRGPYHFRAPSRIFWRTVRGMLPHKTKRGQAALERLKVFDGIPPPYDKKKRMVVPAALKVVRLKPTRKFAYLGRLAHEVGWKYQAVTATLEEKRKEKAKIHYRKKKQLMRLRKQAEKNIEKKIGKFTEVLKTHGFLV</sequence>
<organism>
    <name type="scientific">Bos taurus</name>
    <name type="common">Bovine</name>
    <dbReference type="NCBI Taxonomy" id="9913"/>
    <lineage>
        <taxon>Eukaryota</taxon>
        <taxon>Metazoa</taxon>
        <taxon>Chordata</taxon>
        <taxon>Craniata</taxon>
        <taxon>Vertebrata</taxon>
        <taxon>Euteleostomi</taxon>
        <taxon>Mammalia</taxon>
        <taxon>Eutheria</taxon>
        <taxon>Laurasiatheria</taxon>
        <taxon>Artiodactyla</taxon>
        <taxon>Ruminantia</taxon>
        <taxon>Pecora</taxon>
        <taxon>Bovidae</taxon>
        <taxon>Bovinae</taxon>
        <taxon>Bos</taxon>
    </lineage>
</organism>
<dbReference type="EMBL" id="BC103039">
    <property type="protein sequence ID" value="AAI03040.1"/>
    <property type="molecule type" value="mRNA"/>
</dbReference>
<dbReference type="RefSeq" id="NP_001070466.1">
    <property type="nucleotide sequence ID" value="NM_001076998.2"/>
</dbReference>
<dbReference type="SMR" id="Q3SZ90"/>
<dbReference type="FunCoup" id="Q3SZ90">
    <property type="interactions" value="2152"/>
</dbReference>
<dbReference type="IntAct" id="Q3SZ90">
    <property type="interactions" value="1"/>
</dbReference>
<dbReference type="STRING" id="9913.ENSBTAP00000040732"/>
<dbReference type="PaxDb" id="9913-ENSBTAP00000040732"/>
<dbReference type="PeptideAtlas" id="Q3SZ90"/>
<dbReference type="Ensembl" id="ENSBTAT00000005007.5">
    <property type="protein sequence ID" value="ENSBTAP00000040732.2"/>
    <property type="gene ID" value="ENSBTAG00000005296.6"/>
</dbReference>
<dbReference type="GeneID" id="767925"/>
<dbReference type="KEGG" id="bta:767925"/>
<dbReference type="CTD" id="23521"/>
<dbReference type="VEuPathDB" id="HostDB:ENSBTAG00000005296"/>
<dbReference type="VGNC" id="VGNC:53040">
    <property type="gene designation" value="RPL13A"/>
</dbReference>
<dbReference type="eggNOG" id="KOG3204">
    <property type="taxonomic scope" value="Eukaryota"/>
</dbReference>
<dbReference type="GeneTree" id="ENSGT00390000010799"/>
<dbReference type="HOGENOM" id="CLU_076922_0_0_1"/>
<dbReference type="InParanoid" id="Q3SZ90"/>
<dbReference type="OMA" id="GMLPWKT"/>
<dbReference type="OrthoDB" id="1882297at2759"/>
<dbReference type="TreeFam" id="TF300159"/>
<dbReference type="Reactome" id="R-BTA-156827">
    <property type="pathway name" value="L13a-mediated translational silencing of Ceruloplasmin expression"/>
</dbReference>
<dbReference type="Reactome" id="R-BTA-1799339">
    <property type="pathway name" value="SRP-dependent cotranslational protein targeting to membrane"/>
</dbReference>
<dbReference type="Reactome" id="R-BTA-6791226">
    <property type="pathway name" value="Major pathway of rRNA processing in the nucleolus and cytosol"/>
</dbReference>
<dbReference type="Reactome" id="R-BTA-72689">
    <property type="pathway name" value="Formation of a pool of free 40S subunits"/>
</dbReference>
<dbReference type="Reactome" id="R-BTA-72706">
    <property type="pathway name" value="GTP hydrolysis and joining of the 60S ribosomal subunit"/>
</dbReference>
<dbReference type="Reactome" id="R-BTA-975956">
    <property type="pathway name" value="Nonsense Mediated Decay (NMD) independent of the Exon Junction Complex (EJC)"/>
</dbReference>
<dbReference type="Reactome" id="R-BTA-975957">
    <property type="pathway name" value="Nonsense Mediated Decay (NMD) enhanced by the Exon Junction Complex (EJC)"/>
</dbReference>
<dbReference type="CD-CODE" id="D7FE2080">
    <property type="entry name" value="Nucleolus"/>
</dbReference>
<dbReference type="Proteomes" id="UP000009136">
    <property type="component" value="Chromosome 18"/>
</dbReference>
<dbReference type="Bgee" id="ENSBTAG00000005296">
    <property type="expression patterns" value="Expressed in ileocecal valve and 105 other cell types or tissues"/>
</dbReference>
<dbReference type="GO" id="GO:0022625">
    <property type="term" value="C:cytosolic large ribosomal subunit"/>
    <property type="evidence" value="ECO:0000318"/>
    <property type="project" value="GO_Central"/>
</dbReference>
<dbReference type="GO" id="GO:0097452">
    <property type="term" value="C:GAIT complex"/>
    <property type="evidence" value="ECO:0000250"/>
    <property type="project" value="UniProtKB"/>
</dbReference>
<dbReference type="GO" id="GO:0005840">
    <property type="term" value="C:ribosome"/>
    <property type="evidence" value="ECO:0000318"/>
    <property type="project" value="GO_Central"/>
</dbReference>
<dbReference type="GO" id="GO:0045202">
    <property type="term" value="C:synapse"/>
    <property type="evidence" value="ECO:0007669"/>
    <property type="project" value="Ensembl"/>
</dbReference>
<dbReference type="GO" id="GO:0003729">
    <property type="term" value="F:mRNA binding"/>
    <property type="evidence" value="ECO:0000318"/>
    <property type="project" value="GO_Central"/>
</dbReference>
<dbReference type="GO" id="GO:0003735">
    <property type="term" value="F:structural constituent of ribosome"/>
    <property type="evidence" value="ECO:0000318"/>
    <property type="project" value="GO_Central"/>
</dbReference>
<dbReference type="GO" id="GO:0071346">
    <property type="term" value="P:cellular response to type II interferon"/>
    <property type="evidence" value="ECO:0007669"/>
    <property type="project" value="Ensembl"/>
</dbReference>
<dbReference type="GO" id="GO:0042592">
    <property type="term" value="P:homeostatic process"/>
    <property type="evidence" value="ECO:0007669"/>
    <property type="project" value="Ensembl"/>
</dbReference>
<dbReference type="GO" id="GO:0060425">
    <property type="term" value="P:lung morphogenesis"/>
    <property type="evidence" value="ECO:0007669"/>
    <property type="project" value="Ensembl"/>
</dbReference>
<dbReference type="GO" id="GO:0048246">
    <property type="term" value="P:macrophage chemotaxis"/>
    <property type="evidence" value="ECO:0007669"/>
    <property type="project" value="Ensembl"/>
</dbReference>
<dbReference type="GO" id="GO:1901194">
    <property type="term" value="P:negative regulation of formation of translation preinitiation complex"/>
    <property type="evidence" value="ECO:0000250"/>
    <property type="project" value="UniProtKB"/>
</dbReference>
<dbReference type="GO" id="GO:0017148">
    <property type="term" value="P:negative regulation of translation"/>
    <property type="evidence" value="ECO:0000250"/>
    <property type="project" value="UniProtKB"/>
</dbReference>
<dbReference type="GO" id="GO:0032496">
    <property type="term" value="P:response to lipopolysaccharide"/>
    <property type="evidence" value="ECO:0007669"/>
    <property type="project" value="Ensembl"/>
</dbReference>
<dbReference type="GO" id="GO:0006412">
    <property type="term" value="P:translation"/>
    <property type="evidence" value="ECO:0007669"/>
    <property type="project" value="InterPro"/>
</dbReference>
<dbReference type="CDD" id="cd00392">
    <property type="entry name" value="Ribosomal_L13"/>
    <property type="match status" value="1"/>
</dbReference>
<dbReference type="FunFam" id="6.10.250.3250:FF:000001">
    <property type="entry name" value="60S ribosomal protein L13a"/>
    <property type="match status" value="1"/>
</dbReference>
<dbReference type="FunFam" id="3.90.1180.10:FF:000002">
    <property type="entry name" value="60S ribosomal protein L16"/>
    <property type="match status" value="1"/>
</dbReference>
<dbReference type="Gene3D" id="6.10.250.3250">
    <property type="match status" value="1"/>
</dbReference>
<dbReference type="Gene3D" id="3.90.1180.10">
    <property type="entry name" value="Ribosomal protein L13"/>
    <property type="match status" value="1"/>
</dbReference>
<dbReference type="HAMAP" id="MF_01366">
    <property type="entry name" value="Ribosomal_uL13"/>
    <property type="match status" value="1"/>
</dbReference>
<dbReference type="InterPro" id="IPR005822">
    <property type="entry name" value="Ribosomal_uL13"/>
</dbReference>
<dbReference type="InterPro" id="IPR023563">
    <property type="entry name" value="Ribosomal_uL13_CS"/>
</dbReference>
<dbReference type="InterPro" id="IPR005755">
    <property type="entry name" value="Ribosomal_uL13_euk/arc"/>
</dbReference>
<dbReference type="InterPro" id="IPR036899">
    <property type="entry name" value="Ribosomal_uL13_sf"/>
</dbReference>
<dbReference type="NCBIfam" id="TIGR01077">
    <property type="entry name" value="L13_A_E"/>
    <property type="match status" value="1"/>
</dbReference>
<dbReference type="PANTHER" id="PTHR11545:SF3">
    <property type="entry name" value="LARGE RIBOSOMAL SUBUNIT PROTEIN UL13"/>
    <property type="match status" value="1"/>
</dbReference>
<dbReference type="PANTHER" id="PTHR11545">
    <property type="entry name" value="RIBOSOMAL PROTEIN L13"/>
    <property type="match status" value="1"/>
</dbReference>
<dbReference type="Pfam" id="PF00572">
    <property type="entry name" value="Ribosomal_L13"/>
    <property type="match status" value="1"/>
</dbReference>
<dbReference type="SUPFAM" id="SSF52161">
    <property type="entry name" value="Ribosomal protein L13"/>
    <property type="match status" value="1"/>
</dbReference>
<dbReference type="PROSITE" id="PS00783">
    <property type="entry name" value="RIBOSOMAL_L13"/>
    <property type="match status" value="1"/>
</dbReference>
<protein>
    <recommendedName>
        <fullName evidence="3">Large ribosomal subunit protein uL13</fullName>
    </recommendedName>
    <alternativeName>
        <fullName>60S ribosomal protein L13a</fullName>
    </alternativeName>
</protein>
<keyword id="KW-0007">Acetylation</keyword>
<keyword id="KW-0164">Citrullination</keyword>
<keyword id="KW-0963">Cytoplasm</keyword>
<keyword id="KW-0597">Phosphoprotein</keyword>
<keyword id="KW-1185">Reference proteome</keyword>
<keyword id="KW-0687">Ribonucleoprotein</keyword>
<keyword id="KW-0689">Ribosomal protein</keyword>
<keyword id="KW-0810">Translation regulation</keyword>